<protein>
    <recommendedName>
        <fullName>U4-theraphotoxin-Hhn1f</fullName>
        <shortName>U4-TRTX-Hhn1f</shortName>
    </recommendedName>
    <alternativeName>
        <fullName>Hainantoxin-II-14</fullName>
        <shortName>HNTX-II-14</shortName>
    </alternativeName>
</protein>
<evidence type="ECO:0000250" key="1"/>
<evidence type="ECO:0000255" key="2"/>
<evidence type="ECO:0000305" key="3"/>
<sequence>MKVTLIAILTCAAVLVLHTTAAEELEAESQLMEVGMPDTELAAVDEERLFECSVSCEIEKEGNKDYKKKKCKGGWKYKFNMCVKV</sequence>
<name>H2N01_CYRHA</name>
<reference key="1">
    <citation type="journal article" date="2010" name="J. Proteome Res.">
        <title>Molecular diversification of peptide toxins from the tarantula Haplopelma hainanum (Ornithoctonus hainana) venom based on transcriptomic, peptidomic, and genomic analyses.</title>
        <authorList>
            <person name="Tang X."/>
            <person name="Zhang Y."/>
            <person name="Hu W."/>
            <person name="Xu D."/>
            <person name="Tao H."/>
            <person name="Yang X."/>
            <person name="Li Y."/>
            <person name="Jiang L."/>
            <person name="Liang S."/>
        </authorList>
    </citation>
    <scope>NUCLEOTIDE SEQUENCE [LARGE SCALE MRNA]</scope>
    <source>
        <tissue>Venom gland</tissue>
    </source>
</reference>
<comment type="function">
    <text evidence="1">Postsynaptic neurotoxin.</text>
</comment>
<comment type="subcellular location">
    <subcellularLocation>
        <location evidence="1">Secreted</location>
    </subcellularLocation>
</comment>
<comment type="tissue specificity">
    <text>Expressed by the venom gland.</text>
</comment>
<comment type="similarity">
    <text evidence="3">Belongs to the neurotoxin 12 (Hwtx-2) family. 02 (Hwtx-2) subfamily.</text>
</comment>
<proteinExistence type="evidence at transcript level"/>
<feature type="signal peptide" evidence="2">
    <location>
        <begin position="1"/>
        <end position="22"/>
    </location>
</feature>
<feature type="propeptide" id="PRO_0000400795" evidence="1">
    <location>
        <begin position="23"/>
        <end position="48"/>
    </location>
</feature>
<feature type="peptide" id="PRO_0000400796" description="U4-theraphotoxin-Hhn1f">
    <location>
        <begin position="49"/>
        <end position="85"/>
    </location>
</feature>
<feature type="disulfide bond" evidence="1">
    <location>
        <begin position="71"/>
        <end position="82"/>
    </location>
</feature>
<dbReference type="EMBL" id="GU292902">
    <property type="protein sequence ID" value="ADB56718.1"/>
    <property type="molecule type" value="mRNA"/>
</dbReference>
<dbReference type="SMR" id="D2Y225"/>
<dbReference type="ArachnoServer" id="AS001764">
    <property type="toxin name" value="U4-theraphotoxin-Hhn1f"/>
</dbReference>
<dbReference type="GO" id="GO:0005576">
    <property type="term" value="C:extracellular region"/>
    <property type="evidence" value="ECO:0007669"/>
    <property type="project" value="UniProtKB-SubCell"/>
</dbReference>
<dbReference type="GO" id="GO:0035792">
    <property type="term" value="C:host cell postsynaptic membrane"/>
    <property type="evidence" value="ECO:0007669"/>
    <property type="project" value="UniProtKB-KW"/>
</dbReference>
<dbReference type="GO" id="GO:0090729">
    <property type="term" value="F:toxin activity"/>
    <property type="evidence" value="ECO:0007669"/>
    <property type="project" value="UniProtKB-KW"/>
</dbReference>
<dbReference type="InterPro" id="IPR012625">
    <property type="entry name" value="Hwtx-2-like"/>
</dbReference>
<dbReference type="Pfam" id="PF08089">
    <property type="entry name" value="Toxin_20"/>
    <property type="match status" value="1"/>
</dbReference>
<dbReference type="SUPFAM" id="SSF57059">
    <property type="entry name" value="omega toxin-like"/>
    <property type="match status" value="1"/>
</dbReference>
<accession>D2Y225</accession>
<organism>
    <name type="scientific">Cyriopagopus hainanus</name>
    <name type="common">Chinese bird spider</name>
    <name type="synonym">Haplopelma hainanum</name>
    <dbReference type="NCBI Taxonomy" id="209901"/>
    <lineage>
        <taxon>Eukaryota</taxon>
        <taxon>Metazoa</taxon>
        <taxon>Ecdysozoa</taxon>
        <taxon>Arthropoda</taxon>
        <taxon>Chelicerata</taxon>
        <taxon>Arachnida</taxon>
        <taxon>Araneae</taxon>
        <taxon>Mygalomorphae</taxon>
        <taxon>Theraphosidae</taxon>
        <taxon>Haplopelma</taxon>
    </lineage>
</organism>
<keyword id="KW-1015">Disulfide bond</keyword>
<keyword id="KW-0528">Neurotoxin</keyword>
<keyword id="KW-0629">Postsynaptic neurotoxin</keyword>
<keyword id="KW-0964">Secreted</keyword>
<keyword id="KW-0732">Signal</keyword>
<keyword id="KW-0800">Toxin</keyword>